<feature type="chain" id="PRO_0000320662" description="Guanine nucleotide exchange factor subunit RIC1">
    <location>
        <begin position="1"/>
        <end position="1423"/>
    </location>
</feature>
<feature type="repeat" description="WD 1">
    <location>
        <begin position="64"/>
        <end position="103"/>
    </location>
</feature>
<feature type="repeat" description="WD 2">
    <location>
        <begin position="304"/>
        <end position="343"/>
    </location>
</feature>
<feature type="region of interest" description="Disordered" evidence="3">
    <location>
        <begin position="437"/>
        <end position="463"/>
    </location>
</feature>
<feature type="region of interest" description="Disordered" evidence="3">
    <location>
        <begin position="1355"/>
        <end position="1423"/>
    </location>
</feature>
<feature type="compositionally biased region" description="Polar residues" evidence="3">
    <location>
        <begin position="437"/>
        <end position="448"/>
    </location>
</feature>
<feature type="compositionally biased region" description="Basic and acidic residues" evidence="3">
    <location>
        <begin position="449"/>
        <end position="460"/>
    </location>
</feature>
<feature type="compositionally biased region" description="Polar residues" evidence="3">
    <location>
        <begin position="1379"/>
        <end position="1397"/>
    </location>
</feature>
<feature type="compositionally biased region" description="Acidic residues" evidence="3">
    <location>
        <begin position="1404"/>
        <end position="1413"/>
    </location>
</feature>
<feature type="modified residue" description="Phosphothreonine" evidence="17">
    <location>
        <position position="992"/>
    </location>
</feature>
<feature type="modified residue" description="Phosphothreonine" evidence="16">
    <location>
        <position position="996"/>
    </location>
</feature>
<feature type="modified residue" description="Phosphoserine" evidence="17">
    <location>
        <position position="1015"/>
    </location>
</feature>
<feature type="modified residue" description="Phosphoserine" evidence="17">
    <location>
        <position position="1017"/>
    </location>
</feature>
<feature type="modified residue" description="Phosphoserine" evidence="17">
    <location>
        <position position="1019"/>
    </location>
</feature>
<feature type="modified residue" description="Phosphoserine" evidence="17">
    <location>
        <position position="1037"/>
    </location>
</feature>
<feature type="modified residue" description="Phosphoserine" evidence="2">
    <location>
        <position position="1172"/>
    </location>
</feature>
<feature type="splice variant" id="VSP_042408" description="In isoform 3." evidence="11">
    <location>
        <begin position="498"/>
        <end position="534"/>
    </location>
</feature>
<feature type="splice variant" id="VSP_031706" description="In isoform 2." evidence="9 10">
    <original>VGEQLLKSQSADPFLNLEMDAGIS</original>
    <variation>GNVDFMSLVQGELYFTPCIYTFCY</variation>
    <location>
        <begin position="1142"/>
        <end position="1165"/>
    </location>
</feature>
<feature type="splice variant" id="VSP_031707" description="In isoform 2." evidence="9 10">
    <location>
        <begin position="1166"/>
        <end position="1423"/>
    </location>
</feature>
<feature type="sequence variant" id="VAR_083541" description="In CATIFA; patient cells contain normally spliced transcripts corresponding to protein variant P-1265 but also transcripts that fail to splice due to intron 24 retention leading to a stop codon at position 1266; loss-of-function variant affecting procollagen secretion; dbSNP:rs763515150." evidence="7 8">
    <original>R</original>
    <variation>P</variation>
    <location>
        <position position="1265"/>
    </location>
</feature>
<feature type="sequence variant" id="VAR_083542" description="In CATIFA; patient cells contain transcripts that fail to splice due to intron 24 retention leading to a stop codon at position 1266, but also normally spliced transcripts corresponding to protein variant P-1265; loss-of-function variant affecting procollagen secretion." evidence="8">
    <location>
        <begin position="1266"/>
        <end position="1423"/>
    </location>
</feature>
<feature type="sequence conflict" description="In Ref. 7; BAB84976." evidence="13" ref="7">
    <original>L</original>
    <variation>F</variation>
    <location>
        <position position="659"/>
    </location>
</feature>
<feature type="sequence conflict" description="In Ref. 7; BAB84976." evidence="13" ref="7">
    <original>Q</original>
    <variation>E</variation>
    <location>
        <position position="664"/>
    </location>
</feature>
<feature type="sequence conflict" description="In Ref. 8; AAH30576." evidence="13" ref="8">
    <original>R</original>
    <variation>G</variation>
    <location>
        <position position="1012"/>
    </location>
</feature>
<gene>
    <name evidence="15" type="primary">RIC1</name>
    <name evidence="12" type="synonym">CIP150</name>
    <name evidence="14" type="synonym">KIAA1432</name>
</gene>
<reference key="1">
    <citation type="journal article" date="2004" name="Nature">
        <title>DNA sequence and analysis of human chromosome 9.</title>
        <authorList>
            <person name="Humphray S.J."/>
            <person name="Oliver K."/>
            <person name="Hunt A.R."/>
            <person name="Plumb R.W."/>
            <person name="Loveland J.E."/>
            <person name="Howe K.L."/>
            <person name="Andrews T.D."/>
            <person name="Searle S."/>
            <person name="Hunt S.E."/>
            <person name="Scott C.E."/>
            <person name="Jones M.C."/>
            <person name="Ainscough R."/>
            <person name="Almeida J.P."/>
            <person name="Ambrose K.D."/>
            <person name="Ashwell R.I.S."/>
            <person name="Babbage A.K."/>
            <person name="Babbage S."/>
            <person name="Bagguley C.L."/>
            <person name="Bailey J."/>
            <person name="Banerjee R."/>
            <person name="Barker D.J."/>
            <person name="Barlow K.F."/>
            <person name="Bates K."/>
            <person name="Beasley H."/>
            <person name="Beasley O."/>
            <person name="Bird C.P."/>
            <person name="Bray-Allen S."/>
            <person name="Brown A.J."/>
            <person name="Brown J.Y."/>
            <person name="Burford D."/>
            <person name="Burrill W."/>
            <person name="Burton J."/>
            <person name="Carder C."/>
            <person name="Carter N.P."/>
            <person name="Chapman J.C."/>
            <person name="Chen Y."/>
            <person name="Clarke G."/>
            <person name="Clark S.Y."/>
            <person name="Clee C.M."/>
            <person name="Clegg S."/>
            <person name="Collier R.E."/>
            <person name="Corby N."/>
            <person name="Crosier M."/>
            <person name="Cummings A.T."/>
            <person name="Davies J."/>
            <person name="Dhami P."/>
            <person name="Dunn M."/>
            <person name="Dutta I."/>
            <person name="Dyer L.W."/>
            <person name="Earthrowl M.E."/>
            <person name="Faulkner L."/>
            <person name="Fleming C.J."/>
            <person name="Frankish A."/>
            <person name="Frankland J.A."/>
            <person name="French L."/>
            <person name="Fricker D.G."/>
            <person name="Garner P."/>
            <person name="Garnett J."/>
            <person name="Ghori J."/>
            <person name="Gilbert J.G.R."/>
            <person name="Glison C."/>
            <person name="Grafham D.V."/>
            <person name="Gribble S."/>
            <person name="Griffiths C."/>
            <person name="Griffiths-Jones S."/>
            <person name="Grocock R."/>
            <person name="Guy J."/>
            <person name="Hall R.E."/>
            <person name="Hammond S."/>
            <person name="Harley J.L."/>
            <person name="Harrison E.S.I."/>
            <person name="Hart E.A."/>
            <person name="Heath P.D."/>
            <person name="Henderson C.D."/>
            <person name="Hopkins B.L."/>
            <person name="Howard P.J."/>
            <person name="Howden P.J."/>
            <person name="Huckle E."/>
            <person name="Johnson C."/>
            <person name="Johnson D."/>
            <person name="Joy A.A."/>
            <person name="Kay M."/>
            <person name="Keenan S."/>
            <person name="Kershaw J.K."/>
            <person name="Kimberley A.M."/>
            <person name="King A."/>
            <person name="Knights A."/>
            <person name="Laird G.K."/>
            <person name="Langford C."/>
            <person name="Lawlor S."/>
            <person name="Leongamornlert D.A."/>
            <person name="Leversha M."/>
            <person name="Lloyd C."/>
            <person name="Lloyd D.M."/>
            <person name="Lovell J."/>
            <person name="Martin S."/>
            <person name="Mashreghi-Mohammadi M."/>
            <person name="Matthews L."/>
            <person name="McLaren S."/>
            <person name="McLay K.E."/>
            <person name="McMurray A."/>
            <person name="Milne S."/>
            <person name="Nickerson T."/>
            <person name="Nisbett J."/>
            <person name="Nordsiek G."/>
            <person name="Pearce A.V."/>
            <person name="Peck A.I."/>
            <person name="Porter K.M."/>
            <person name="Pandian R."/>
            <person name="Pelan S."/>
            <person name="Phillimore B."/>
            <person name="Povey S."/>
            <person name="Ramsey Y."/>
            <person name="Rand V."/>
            <person name="Scharfe M."/>
            <person name="Sehra H.K."/>
            <person name="Shownkeen R."/>
            <person name="Sims S.K."/>
            <person name="Skuce C.D."/>
            <person name="Smith M."/>
            <person name="Steward C.A."/>
            <person name="Swarbreck D."/>
            <person name="Sycamore N."/>
            <person name="Tester J."/>
            <person name="Thorpe A."/>
            <person name="Tracey A."/>
            <person name="Tromans A."/>
            <person name="Thomas D.W."/>
            <person name="Wall M."/>
            <person name="Wallis J.M."/>
            <person name="West A.P."/>
            <person name="Whitehead S.L."/>
            <person name="Willey D.L."/>
            <person name="Williams S.A."/>
            <person name="Wilming L."/>
            <person name="Wray P.W."/>
            <person name="Young L."/>
            <person name="Ashurst J.L."/>
            <person name="Coulson A."/>
            <person name="Blocker H."/>
            <person name="Durbin R.M."/>
            <person name="Sulston J.E."/>
            <person name="Hubbard T."/>
            <person name="Jackson M.J."/>
            <person name="Bentley D.R."/>
            <person name="Beck S."/>
            <person name="Rogers J."/>
            <person name="Dunham I."/>
        </authorList>
    </citation>
    <scope>NUCLEOTIDE SEQUENCE [LARGE SCALE GENOMIC DNA]</scope>
</reference>
<reference key="2">
    <citation type="submission" date="2005-09" db="EMBL/GenBank/DDBJ databases">
        <authorList>
            <person name="Mural R.J."/>
            <person name="Istrail S."/>
            <person name="Sutton G.G."/>
            <person name="Florea L."/>
            <person name="Halpern A.L."/>
            <person name="Mobarry C.M."/>
            <person name="Lippert R."/>
            <person name="Walenz B."/>
            <person name="Shatkay H."/>
            <person name="Dew I."/>
            <person name="Miller J.R."/>
            <person name="Flanigan M.J."/>
            <person name="Edwards N.J."/>
            <person name="Bolanos R."/>
            <person name="Fasulo D."/>
            <person name="Halldorsson B.V."/>
            <person name="Hannenhalli S."/>
            <person name="Turner R."/>
            <person name="Yooseph S."/>
            <person name="Lu F."/>
            <person name="Nusskern D.R."/>
            <person name="Shue B.C."/>
            <person name="Zheng X.H."/>
            <person name="Zhong F."/>
            <person name="Delcher A.L."/>
            <person name="Huson D.H."/>
            <person name="Kravitz S.A."/>
            <person name="Mouchard L."/>
            <person name="Reinert K."/>
            <person name="Remington K.A."/>
            <person name="Clark A.G."/>
            <person name="Waterman M.S."/>
            <person name="Eichler E.E."/>
            <person name="Adams M.D."/>
            <person name="Hunkapiller M.W."/>
            <person name="Myers E.W."/>
            <person name="Venter J.C."/>
        </authorList>
    </citation>
    <scope>NUCLEOTIDE SEQUENCE [LARGE SCALE GENOMIC DNA]</scope>
</reference>
<reference key="3">
    <citation type="journal article" date="2001" name="Genome Res.">
        <title>Towards a catalog of human genes and proteins: sequencing and analysis of 500 novel complete protein coding human cDNAs.</title>
        <authorList>
            <person name="Wiemann S."/>
            <person name="Weil B."/>
            <person name="Wellenreuther R."/>
            <person name="Gassenhuber J."/>
            <person name="Glassl S."/>
            <person name="Ansorge W."/>
            <person name="Boecher M."/>
            <person name="Bloecker H."/>
            <person name="Bauersachs S."/>
            <person name="Blum H."/>
            <person name="Lauber J."/>
            <person name="Duesterhoeft A."/>
            <person name="Beyer A."/>
            <person name="Koehrer K."/>
            <person name="Strack N."/>
            <person name="Mewes H.-W."/>
            <person name="Ottenwaelder B."/>
            <person name="Obermaier B."/>
            <person name="Tampe J."/>
            <person name="Heubner D."/>
            <person name="Wambutt R."/>
            <person name="Korn B."/>
            <person name="Klein M."/>
            <person name="Poustka A."/>
        </authorList>
    </citation>
    <scope>NUCLEOTIDE SEQUENCE [LARGE SCALE MRNA] OF 7-1423 (ISOFORM 2)</scope>
    <source>
        <tissue>Testis</tissue>
    </source>
</reference>
<reference key="4">
    <citation type="journal article" date="2005" name="Biochem. Biophys. Res. Commun.">
        <title>Molecular cloning and functional analysis of a novel Cx43 partner protein CIP150.</title>
        <authorList>
            <person name="Akiyama M."/>
            <person name="Ishida N."/>
            <person name="Ogawa T."/>
            <person name="Yogo K."/>
            <person name="Takeya T."/>
        </authorList>
    </citation>
    <scope>NUCLEOTIDE SEQUENCE [MRNA] OF 73-1423 (ISOFORM 1)</scope>
    <scope>FUNCTION</scope>
    <scope>TISSUE SPECIFICITY</scope>
    <scope>INTERACTION WITH GJA1</scope>
    <source>
        <tissue>Placenta</tissue>
    </source>
</reference>
<reference key="5">
    <citation type="journal article" date="2004" name="Genome Res.">
        <title>The status, quality, and expansion of the NIH full-length cDNA project: the Mammalian Gene Collection (MGC).</title>
        <authorList>
            <consortium name="The MGC Project Team"/>
        </authorList>
    </citation>
    <scope>NUCLEOTIDE SEQUENCE [LARGE SCALE MRNA] OF 73-1423 (ISOFORMS 1 AND 3)</scope>
    <source>
        <tissue>Bone marrow</tissue>
    </source>
</reference>
<reference key="6">
    <citation type="journal article" date="2004" name="Nat. Genet.">
        <title>Complete sequencing and characterization of 21,243 full-length human cDNAs.</title>
        <authorList>
            <person name="Ota T."/>
            <person name="Suzuki Y."/>
            <person name="Nishikawa T."/>
            <person name="Otsuki T."/>
            <person name="Sugiyama T."/>
            <person name="Irie R."/>
            <person name="Wakamatsu A."/>
            <person name="Hayashi K."/>
            <person name="Sato H."/>
            <person name="Nagai K."/>
            <person name="Kimura K."/>
            <person name="Makita H."/>
            <person name="Sekine M."/>
            <person name="Obayashi M."/>
            <person name="Nishi T."/>
            <person name="Shibahara T."/>
            <person name="Tanaka T."/>
            <person name="Ishii S."/>
            <person name="Yamamoto J."/>
            <person name="Saito K."/>
            <person name="Kawai Y."/>
            <person name="Isono Y."/>
            <person name="Nakamura Y."/>
            <person name="Nagahari K."/>
            <person name="Murakami K."/>
            <person name="Yasuda T."/>
            <person name="Iwayanagi T."/>
            <person name="Wagatsuma M."/>
            <person name="Shiratori A."/>
            <person name="Sudo H."/>
            <person name="Hosoiri T."/>
            <person name="Kaku Y."/>
            <person name="Kodaira H."/>
            <person name="Kondo H."/>
            <person name="Sugawara M."/>
            <person name="Takahashi M."/>
            <person name="Kanda K."/>
            <person name="Yokoi T."/>
            <person name="Furuya T."/>
            <person name="Kikkawa E."/>
            <person name="Omura Y."/>
            <person name="Abe K."/>
            <person name="Kamihara K."/>
            <person name="Katsuta N."/>
            <person name="Sato K."/>
            <person name="Tanikawa M."/>
            <person name="Yamazaki M."/>
            <person name="Ninomiya K."/>
            <person name="Ishibashi T."/>
            <person name="Yamashita H."/>
            <person name="Murakawa K."/>
            <person name="Fujimori K."/>
            <person name="Tanai H."/>
            <person name="Kimata M."/>
            <person name="Watanabe M."/>
            <person name="Hiraoka S."/>
            <person name="Chiba Y."/>
            <person name="Ishida S."/>
            <person name="Ono Y."/>
            <person name="Takiguchi S."/>
            <person name="Watanabe S."/>
            <person name="Yosida M."/>
            <person name="Hotuta T."/>
            <person name="Kusano J."/>
            <person name="Kanehori K."/>
            <person name="Takahashi-Fujii A."/>
            <person name="Hara H."/>
            <person name="Tanase T.-O."/>
            <person name="Nomura Y."/>
            <person name="Togiya S."/>
            <person name="Komai F."/>
            <person name="Hara R."/>
            <person name="Takeuchi K."/>
            <person name="Arita M."/>
            <person name="Imose N."/>
            <person name="Musashino K."/>
            <person name="Yuuki H."/>
            <person name="Oshima A."/>
            <person name="Sasaki N."/>
            <person name="Aotsuka S."/>
            <person name="Yoshikawa Y."/>
            <person name="Matsunawa H."/>
            <person name="Ichihara T."/>
            <person name="Shiohata N."/>
            <person name="Sano S."/>
            <person name="Moriya S."/>
            <person name="Momiyama H."/>
            <person name="Satoh N."/>
            <person name="Takami S."/>
            <person name="Terashima Y."/>
            <person name="Suzuki O."/>
            <person name="Nakagawa S."/>
            <person name="Senoh A."/>
            <person name="Mizoguchi H."/>
            <person name="Goto Y."/>
            <person name="Shimizu F."/>
            <person name="Wakebe H."/>
            <person name="Hishigaki H."/>
            <person name="Watanabe T."/>
            <person name="Sugiyama A."/>
            <person name="Takemoto M."/>
            <person name="Kawakami B."/>
            <person name="Yamazaki M."/>
            <person name="Watanabe K."/>
            <person name="Kumagai A."/>
            <person name="Itakura S."/>
            <person name="Fukuzumi Y."/>
            <person name="Fujimori Y."/>
            <person name="Komiyama M."/>
            <person name="Tashiro H."/>
            <person name="Tanigami A."/>
            <person name="Fujiwara T."/>
            <person name="Ono T."/>
            <person name="Yamada K."/>
            <person name="Fujii Y."/>
            <person name="Ozaki K."/>
            <person name="Hirao M."/>
            <person name="Ohmori Y."/>
            <person name="Kawabata A."/>
            <person name="Hikiji T."/>
            <person name="Kobatake N."/>
            <person name="Inagaki H."/>
            <person name="Ikema Y."/>
            <person name="Okamoto S."/>
            <person name="Okitani R."/>
            <person name="Kawakami T."/>
            <person name="Noguchi S."/>
            <person name="Itoh T."/>
            <person name="Shigeta K."/>
            <person name="Senba T."/>
            <person name="Matsumura K."/>
            <person name="Nakajima Y."/>
            <person name="Mizuno T."/>
            <person name="Morinaga M."/>
            <person name="Sasaki M."/>
            <person name="Togashi T."/>
            <person name="Oyama M."/>
            <person name="Hata H."/>
            <person name="Watanabe M."/>
            <person name="Komatsu T."/>
            <person name="Mizushima-Sugano J."/>
            <person name="Satoh T."/>
            <person name="Shirai Y."/>
            <person name="Takahashi Y."/>
            <person name="Nakagawa K."/>
            <person name="Okumura K."/>
            <person name="Nagase T."/>
            <person name="Nomura N."/>
            <person name="Kikuchi H."/>
            <person name="Masuho Y."/>
            <person name="Yamashita R."/>
            <person name="Nakai K."/>
            <person name="Yada T."/>
            <person name="Nakamura Y."/>
            <person name="Ohara O."/>
            <person name="Isogai T."/>
            <person name="Sugano S."/>
        </authorList>
    </citation>
    <scope>NUCLEOTIDE SEQUENCE [LARGE SCALE MRNA] OF 531-1423 (ISOFORM 2)</scope>
    <source>
        <tissue>Teratocarcinoma</tissue>
    </source>
</reference>
<reference key="7">
    <citation type="journal article" date="2000" name="DNA Res.">
        <title>Prediction of the coding sequences of unidentified human genes. XVI. The complete sequences of 150 new cDNA clones from brain which code for large proteins in vitro.</title>
        <authorList>
            <person name="Nagase T."/>
            <person name="Kikuno R."/>
            <person name="Ishikawa K."/>
            <person name="Hirosawa M."/>
            <person name="Ohara O."/>
        </authorList>
    </citation>
    <scope>NUCLEOTIDE SEQUENCE [LARGE SCALE MRNA] OF 628-1423 (ISOFORM 1)</scope>
    <scope>TISSUE SPECIFICITY</scope>
    <source>
        <tissue>Brain</tissue>
    </source>
</reference>
<reference key="8">
    <citation type="journal article" date="2002" name="DNA Res.">
        <title>Construction of expression-ready cDNA clones for KIAA genes: manual curation of 330 KIAA cDNA clones.</title>
        <authorList>
            <person name="Nakajima D."/>
            <person name="Okazaki N."/>
            <person name="Yamakawa H."/>
            <person name="Kikuno R."/>
            <person name="Ohara O."/>
            <person name="Nagase T."/>
        </authorList>
    </citation>
    <scope>SEQUENCE REVISION</scope>
</reference>
<reference key="9">
    <citation type="submission" date="2002-01" db="EMBL/GenBank/DDBJ databases">
        <title>The nucleotide sequence of a long cDNA clone isolated from human spleen.</title>
        <authorList>
            <person name="Jikuya H."/>
            <person name="Takano J."/>
            <person name="Nomura N."/>
            <person name="Kikuno R."/>
            <person name="Nagase T."/>
            <person name="Ohara O."/>
        </authorList>
    </citation>
    <scope>NUCLEOTIDE SEQUENCE [LARGE SCALE MRNA] OF 656-1423</scope>
    <source>
        <tissue>Spleen</tissue>
    </source>
</reference>
<reference key="10">
    <citation type="journal article" date="2008" name="Proc. Natl. Acad. Sci. U.S.A.">
        <title>A quantitative atlas of mitotic phosphorylation.</title>
        <authorList>
            <person name="Dephoure N."/>
            <person name="Zhou C."/>
            <person name="Villen J."/>
            <person name="Beausoleil S.A."/>
            <person name="Bakalarski C.E."/>
            <person name="Elledge S.J."/>
            <person name="Gygi S.P."/>
        </authorList>
    </citation>
    <scope>PHOSPHORYLATION [LARGE SCALE ANALYSIS] AT THR-996</scope>
    <scope>IDENTIFICATION BY MASS SPECTROMETRY [LARGE SCALE ANALYSIS]</scope>
    <source>
        <tissue>Cervix carcinoma</tissue>
    </source>
</reference>
<reference key="11">
    <citation type="journal article" date="2009" name="Anal. Chem.">
        <title>Lys-N and trypsin cover complementary parts of the phosphoproteome in a refined SCX-based approach.</title>
        <authorList>
            <person name="Gauci S."/>
            <person name="Helbig A.O."/>
            <person name="Slijper M."/>
            <person name="Krijgsveld J."/>
            <person name="Heck A.J."/>
            <person name="Mohammed S."/>
        </authorList>
    </citation>
    <scope>IDENTIFICATION BY MASS SPECTROMETRY [LARGE SCALE ANALYSIS]</scope>
</reference>
<reference key="12">
    <citation type="journal article" date="2009" name="Sci. Signal.">
        <title>Quantitative phosphoproteomic analysis of T cell receptor signaling reveals system-wide modulation of protein-protein interactions.</title>
        <authorList>
            <person name="Mayya V."/>
            <person name="Lundgren D.H."/>
            <person name="Hwang S.-I."/>
            <person name="Rezaul K."/>
            <person name="Wu L."/>
            <person name="Eng J.K."/>
            <person name="Rodionov V."/>
            <person name="Han D.K."/>
        </authorList>
    </citation>
    <scope>IDENTIFICATION BY MASS SPECTROMETRY [LARGE SCALE ANALYSIS]</scope>
    <source>
        <tissue>Leukemic T-cell</tissue>
    </source>
</reference>
<reference key="13">
    <citation type="journal article" date="2011" name="Sci. Signal.">
        <title>System-wide temporal characterization of the proteome and phosphoproteome of human embryonic stem cell differentiation.</title>
        <authorList>
            <person name="Rigbolt K.T."/>
            <person name="Prokhorova T.A."/>
            <person name="Akimov V."/>
            <person name="Henningsen J."/>
            <person name="Johansen P.T."/>
            <person name="Kratchmarova I."/>
            <person name="Kassem M."/>
            <person name="Mann M."/>
            <person name="Olsen J.V."/>
            <person name="Blagoev B."/>
        </authorList>
    </citation>
    <scope>IDENTIFICATION BY MASS SPECTROMETRY [LARGE SCALE ANALYSIS]</scope>
</reference>
<reference key="14">
    <citation type="journal article" date="2012" name="J. Biol. Chem.">
        <title>Ric1-Rgp1 complex is a guanine nucleotide exchange factor for the late Golgi Rab6A GTPase and an effector of the medial Golgi Rab33B GTPase.</title>
        <authorList>
            <person name="Pusapati G.V."/>
            <person name="Luchetti G."/>
            <person name="Pfeffer S.R."/>
        </authorList>
    </citation>
    <scope>FUNCTION</scope>
    <scope>SUBCELLULAR LOCATION</scope>
    <scope>INTERACTION WITH RGP1; RAB33B AND RAB6A</scope>
</reference>
<reference key="15">
    <citation type="journal article" date="2013" name="J. Proteome Res.">
        <title>Toward a comprehensive characterization of a human cancer cell phosphoproteome.</title>
        <authorList>
            <person name="Zhou H."/>
            <person name="Di Palma S."/>
            <person name="Preisinger C."/>
            <person name="Peng M."/>
            <person name="Polat A.N."/>
            <person name="Heck A.J."/>
            <person name="Mohammed S."/>
        </authorList>
    </citation>
    <scope>PHOSPHORYLATION [LARGE SCALE ANALYSIS] AT THR-992; SER-1015; SER-1017; SER-1019 AND SER-1037</scope>
    <scope>IDENTIFICATION BY MASS SPECTROMETRY [LARGE SCALE ANALYSIS]</scope>
    <source>
        <tissue>Cervix carcinoma</tissue>
        <tissue>Erythroleukemia</tissue>
    </source>
</reference>
<reference key="16">
    <citation type="journal article" date="2014" name="J. Proteomics">
        <title>An enzyme assisted RP-RPLC approach for in-depth analysis of human liver phosphoproteome.</title>
        <authorList>
            <person name="Bian Y."/>
            <person name="Song C."/>
            <person name="Cheng K."/>
            <person name="Dong M."/>
            <person name="Wang F."/>
            <person name="Huang J."/>
            <person name="Sun D."/>
            <person name="Wang L."/>
            <person name="Ye M."/>
            <person name="Zou H."/>
        </authorList>
    </citation>
    <scope>IDENTIFICATION BY MASS SPECTROMETRY [LARGE SCALE ANALYSIS]</scope>
    <source>
        <tissue>Liver</tissue>
    </source>
</reference>
<reference key="17">
    <citation type="journal article" date="2017" name="Hum. Genet.">
        <title>Novel phenotypes and loci identified through clinical genomics approaches to pediatric cataract.</title>
        <authorList>
            <person name="Patel N."/>
            <person name="Anand D."/>
            <person name="Monies D."/>
            <person name="Maddirevula S."/>
            <person name="Khan A.O."/>
            <person name="Algoufi T."/>
            <person name="Alowain M."/>
            <person name="Faqeih E."/>
            <person name="Alshammari M."/>
            <person name="Qudair A."/>
            <person name="Alsharif H."/>
            <person name="Aljubran F."/>
            <person name="Alsaif H.S."/>
            <person name="Ibrahim N."/>
            <person name="Abdulwahab F.M."/>
            <person name="Hashem M."/>
            <person name="Alsedairy H."/>
            <person name="Aldahmesh M.A."/>
            <person name="Lachke S.A."/>
            <person name="Alkuraya F.S."/>
        </authorList>
    </citation>
    <scope>VARIANT CATIFA PRO-1265</scope>
    <scope>INVOLVEMENT IN CATIFA</scope>
</reference>
<reference key="18">
    <citation type="journal article" date="2020" name="Nat. Med.">
        <title>Phenome-based approach identifies RIC1-linked Mendelian syndrome through zebrafish models, biobank associations and clinical studies.</title>
        <authorList>
            <person name="Unlu G."/>
            <person name="Qi X."/>
            <person name="Gamazon E.R."/>
            <person name="Melville D.B."/>
            <person name="Patel N."/>
            <person name="Rushing A.R."/>
            <person name="Hashem M."/>
            <person name="Al-Faifi A."/>
            <person name="Chen R."/>
            <person name="Li B."/>
            <person name="Cox N.J."/>
            <person name="Alkuraya F.S."/>
            <person name="Knapik E.W."/>
        </authorList>
    </citation>
    <scope>VARIANTS CATIFA PRO-1265 AND 1266-TYR--SER-1423 DEL</scope>
    <scope>CHARACTERIZATION OF VARIANTS CATIFA PRO-1265 AND 1266-TYR--SER-1423 DEL</scope>
    <scope>INVOLVEMENT IN CATIFA</scope>
    <scope>FUNCTION</scope>
</reference>
<dbReference type="EMBL" id="AL136980">
    <property type="status" value="NOT_ANNOTATED_CDS"/>
    <property type="molecule type" value="Genomic_DNA"/>
</dbReference>
<dbReference type="EMBL" id="AL354744">
    <property type="status" value="NOT_ANNOTATED_CDS"/>
    <property type="molecule type" value="Genomic_DNA"/>
</dbReference>
<dbReference type="EMBL" id="CH471071">
    <property type="protein sequence ID" value="EAW58760.1"/>
    <property type="molecule type" value="Genomic_DNA"/>
</dbReference>
<dbReference type="EMBL" id="AL136875">
    <property type="protein sequence ID" value="CAB66809.1"/>
    <property type="status" value="ALT_INIT"/>
    <property type="molecule type" value="mRNA"/>
</dbReference>
<dbReference type="EMBL" id="AB205401">
    <property type="protein sequence ID" value="BAE16982.1"/>
    <property type="status" value="ALT_INIT"/>
    <property type="molecule type" value="mRNA"/>
</dbReference>
<dbReference type="EMBL" id="AK022642">
    <property type="protein sequence ID" value="BAB14150.1"/>
    <property type="status" value="ALT_INIT"/>
    <property type="molecule type" value="mRNA"/>
</dbReference>
<dbReference type="EMBL" id="AB037853">
    <property type="protein sequence ID" value="BAA92670.2"/>
    <property type="molecule type" value="mRNA"/>
</dbReference>
<dbReference type="EMBL" id="AK074150">
    <property type="protein sequence ID" value="BAB84976.1"/>
    <property type="molecule type" value="mRNA"/>
</dbReference>
<dbReference type="EMBL" id="BC030576">
    <property type="protein sequence ID" value="AAH30576.1"/>
    <property type="molecule type" value="mRNA"/>
</dbReference>
<dbReference type="EMBL" id="BC136616">
    <property type="protein sequence ID" value="AAI36617.1"/>
    <property type="status" value="ALT_INIT"/>
    <property type="molecule type" value="mRNA"/>
</dbReference>
<dbReference type="EMBL" id="BC144296">
    <property type="protein sequence ID" value="AAI44297.1"/>
    <property type="status" value="ALT_INIT"/>
    <property type="molecule type" value="mRNA"/>
</dbReference>
<dbReference type="CCDS" id="CCDS34982.2">
    <molecule id="Q4ADV7-1"/>
</dbReference>
<dbReference type="CCDS" id="CCDS47949.2">
    <molecule id="Q4ADV7-2"/>
</dbReference>
<dbReference type="CCDS" id="CCDS75811.1">
    <molecule id="Q4ADV7-3"/>
</dbReference>
<dbReference type="RefSeq" id="NP_001129392.2">
    <molecule id="Q4ADV7-2"/>
    <property type="nucleotide sequence ID" value="NM_001135920.4"/>
</dbReference>
<dbReference type="RefSeq" id="NP_001193486.1">
    <molecule id="Q4ADV7-3"/>
    <property type="nucleotide sequence ID" value="NM_001206557.2"/>
</dbReference>
<dbReference type="RefSeq" id="NP_065880.2">
    <molecule id="Q4ADV7-1"/>
    <property type="nucleotide sequence ID" value="NM_020829.4"/>
</dbReference>
<dbReference type="BioGRID" id="121640">
    <property type="interactions" value="37"/>
</dbReference>
<dbReference type="ComplexPortal" id="CPX-25521">
    <property type="entry name" value="RIC1-RGP1 guanyl-nucleotide exchange factor complex"/>
</dbReference>
<dbReference type="FunCoup" id="Q4ADV7">
    <property type="interactions" value="2299"/>
</dbReference>
<dbReference type="IntAct" id="Q4ADV7">
    <property type="interactions" value="12"/>
</dbReference>
<dbReference type="MINT" id="Q4ADV7"/>
<dbReference type="STRING" id="9606.ENSP00000416696"/>
<dbReference type="iPTMnet" id="Q4ADV7"/>
<dbReference type="PhosphoSitePlus" id="Q4ADV7"/>
<dbReference type="BioMuta" id="RIC1"/>
<dbReference type="DMDM" id="182702127"/>
<dbReference type="jPOST" id="Q4ADV7"/>
<dbReference type="MassIVE" id="Q4ADV7"/>
<dbReference type="PaxDb" id="9606-ENSP00000416696"/>
<dbReference type="PeptideAtlas" id="Q4ADV7"/>
<dbReference type="ProteomicsDB" id="62090">
    <molecule id="Q4ADV7-1"/>
</dbReference>
<dbReference type="ProteomicsDB" id="62091">
    <molecule id="Q4ADV7-2"/>
</dbReference>
<dbReference type="ProteomicsDB" id="62092">
    <molecule id="Q4ADV7-3"/>
</dbReference>
<dbReference type="Pumba" id="Q4ADV7"/>
<dbReference type="Antibodypedia" id="70521">
    <property type="antibodies" value="24 antibodies from 6 providers"/>
</dbReference>
<dbReference type="DNASU" id="57589"/>
<dbReference type="Ensembl" id="ENST00000251879.10">
    <molecule id="Q4ADV7-2"/>
    <property type="protein sequence ID" value="ENSP00000251879.6"/>
    <property type="gene ID" value="ENSG00000107036.12"/>
</dbReference>
<dbReference type="Ensembl" id="ENST00000414202.7">
    <molecule id="Q4ADV7-1"/>
    <property type="protein sequence ID" value="ENSP00000416696.2"/>
    <property type="gene ID" value="ENSG00000107036.12"/>
</dbReference>
<dbReference type="Ensembl" id="ENST00000418622.7">
    <molecule id="Q4ADV7-3"/>
    <property type="protein sequence ID" value="ENSP00000402240.4"/>
    <property type="gene ID" value="ENSG00000107036.12"/>
</dbReference>
<dbReference type="GeneID" id="57589"/>
<dbReference type="KEGG" id="hsa:57589"/>
<dbReference type="MANE-Select" id="ENST00000414202.7">
    <property type="protein sequence ID" value="ENSP00000416696.2"/>
    <property type="RefSeq nucleotide sequence ID" value="NM_020829.4"/>
    <property type="RefSeq protein sequence ID" value="NP_065880.2"/>
</dbReference>
<dbReference type="UCSC" id="uc003zjh.5">
    <molecule id="Q4ADV7-1"/>
    <property type="organism name" value="human"/>
</dbReference>
<dbReference type="AGR" id="HGNC:17686"/>
<dbReference type="CTD" id="57589"/>
<dbReference type="DisGeNET" id="57589"/>
<dbReference type="GeneCards" id="RIC1"/>
<dbReference type="HGNC" id="HGNC:17686">
    <property type="gene designation" value="RIC1"/>
</dbReference>
<dbReference type="HPA" id="ENSG00000107036">
    <property type="expression patterns" value="Low tissue specificity"/>
</dbReference>
<dbReference type="MalaCards" id="RIC1"/>
<dbReference type="MIM" id="610354">
    <property type="type" value="gene"/>
</dbReference>
<dbReference type="MIM" id="618761">
    <property type="type" value="phenotype"/>
</dbReference>
<dbReference type="neXtProt" id="NX_Q4ADV7"/>
<dbReference type="OpenTargets" id="ENSG00000107036"/>
<dbReference type="Orphanet" id="199306">
    <property type="disease" value="Cleft lip/palate"/>
</dbReference>
<dbReference type="PharmGKB" id="PA134884486"/>
<dbReference type="VEuPathDB" id="HostDB:ENSG00000107036"/>
<dbReference type="eggNOG" id="KOG2006">
    <property type="taxonomic scope" value="Eukaryota"/>
</dbReference>
<dbReference type="GeneTree" id="ENSGT00390000002955"/>
<dbReference type="HOGENOM" id="CLU_002060_3_1_1"/>
<dbReference type="InParanoid" id="Q4ADV7"/>
<dbReference type="OMA" id="MVYDRAM"/>
<dbReference type="OrthoDB" id="67540at2759"/>
<dbReference type="PAN-GO" id="Q4ADV7">
    <property type="GO annotations" value="5 GO annotations based on evolutionary models"/>
</dbReference>
<dbReference type="PhylomeDB" id="Q4ADV7"/>
<dbReference type="TreeFam" id="TF105927"/>
<dbReference type="PathwayCommons" id="Q4ADV7"/>
<dbReference type="Reactome" id="R-HSA-6811438">
    <property type="pathway name" value="Intra-Golgi traffic"/>
</dbReference>
<dbReference type="Reactome" id="R-HSA-6811440">
    <property type="pathway name" value="Retrograde transport at the Trans-Golgi-Network"/>
</dbReference>
<dbReference type="Reactome" id="R-HSA-8876198">
    <property type="pathway name" value="RAB GEFs exchange GTP for GDP on RABs"/>
</dbReference>
<dbReference type="SignaLink" id="Q4ADV7"/>
<dbReference type="BioGRID-ORCS" id="57589">
    <property type="hits" value="386 hits in 1180 CRISPR screens"/>
</dbReference>
<dbReference type="ChiTaRS" id="RIC1">
    <property type="organism name" value="human"/>
</dbReference>
<dbReference type="GenomeRNAi" id="57589"/>
<dbReference type="Pharos" id="Q4ADV7">
    <property type="development level" value="Tbio"/>
</dbReference>
<dbReference type="PRO" id="PR:Q4ADV7"/>
<dbReference type="Proteomes" id="UP000005640">
    <property type="component" value="Chromosome 9"/>
</dbReference>
<dbReference type="RNAct" id="Q4ADV7">
    <property type="molecule type" value="protein"/>
</dbReference>
<dbReference type="Bgee" id="ENSG00000107036">
    <property type="expression patterns" value="Expressed in tibialis anterior and 186 other cell types or tissues"/>
</dbReference>
<dbReference type="ExpressionAtlas" id="Q4ADV7">
    <property type="expression patterns" value="baseline and differential"/>
</dbReference>
<dbReference type="GO" id="GO:0005829">
    <property type="term" value="C:cytosol"/>
    <property type="evidence" value="ECO:0000314"/>
    <property type="project" value="UniProtKB"/>
</dbReference>
<dbReference type="GO" id="GO:0000139">
    <property type="term" value="C:Golgi membrane"/>
    <property type="evidence" value="ECO:0000318"/>
    <property type="project" value="GO_Central"/>
</dbReference>
<dbReference type="GO" id="GO:0016020">
    <property type="term" value="C:membrane"/>
    <property type="evidence" value="ECO:0000314"/>
    <property type="project" value="UniProtKB"/>
</dbReference>
<dbReference type="GO" id="GO:0032991">
    <property type="term" value="C:protein-containing complex"/>
    <property type="evidence" value="ECO:0000314"/>
    <property type="project" value="UniProtKB"/>
</dbReference>
<dbReference type="GO" id="GO:0034066">
    <property type="term" value="C:Ric1-Rgp1 guanyl-nucleotide exchange factor complex"/>
    <property type="evidence" value="ECO:0000314"/>
    <property type="project" value="UniProtKB"/>
</dbReference>
<dbReference type="GO" id="GO:0032588">
    <property type="term" value="C:trans-Golgi network membrane"/>
    <property type="evidence" value="ECO:0000304"/>
    <property type="project" value="Reactome"/>
</dbReference>
<dbReference type="GO" id="GO:0005085">
    <property type="term" value="F:guanyl-nucleotide exchange factor activity"/>
    <property type="evidence" value="ECO:0000314"/>
    <property type="project" value="UniProtKB"/>
</dbReference>
<dbReference type="GO" id="GO:0031267">
    <property type="term" value="F:small GTPase binding"/>
    <property type="evidence" value="ECO:0000314"/>
    <property type="project" value="UniProtKB"/>
</dbReference>
<dbReference type="GO" id="GO:1904888">
    <property type="term" value="P:cranial skeletal system development"/>
    <property type="evidence" value="ECO:0000315"/>
    <property type="project" value="UniProtKB"/>
</dbReference>
<dbReference type="GO" id="GO:0006886">
    <property type="term" value="P:intracellular protein transport"/>
    <property type="evidence" value="ECO:0000318"/>
    <property type="project" value="GO_Central"/>
</dbReference>
<dbReference type="GO" id="GO:0042177">
    <property type="term" value="P:negative regulation of protein catabolic process"/>
    <property type="evidence" value="ECO:0000315"/>
    <property type="project" value="UniProtKB"/>
</dbReference>
<dbReference type="GO" id="GO:0043547">
    <property type="term" value="P:positive regulation of GTPase activity"/>
    <property type="evidence" value="ECO:0000314"/>
    <property type="project" value="UniProtKB"/>
</dbReference>
<dbReference type="GO" id="GO:0003330">
    <property type="term" value="P:regulation of extracellular matrix constituent secretion"/>
    <property type="evidence" value="ECO:0000315"/>
    <property type="project" value="UniProtKB"/>
</dbReference>
<dbReference type="GO" id="GO:0042147">
    <property type="term" value="P:retrograde transport, endosome to Golgi"/>
    <property type="evidence" value="ECO:0000315"/>
    <property type="project" value="UniProtKB"/>
</dbReference>
<dbReference type="FunFam" id="2.130.10.10:FF:000288">
    <property type="entry name" value="RAB6A-GEF complex partner protein 1 isoform X3"/>
    <property type="match status" value="1"/>
</dbReference>
<dbReference type="Gene3D" id="2.130.10.10">
    <property type="entry name" value="YVTN repeat-like/Quinoprotein amine dehydrogenase"/>
    <property type="match status" value="1"/>
</dbReference>
<dbReference type="InterPro" id="IPR040096">
    <property type="entry name" value="Ric1"/>
</dbReference>
<dbReference type="InterPro" id="IPR009771">
    <property type="entry name" value="RIC1_C"/>
</dbReference>
<dbReference type="InterPro" id="IPR015943">
    <property type="entry name" value="WD40/YVTN_repeat-like_dom_sf"/>
</dbReference>
<dbReference type="InterPro" id="IPR036322">
    <property type="entry name" value="WD40_repeat_dom_sf"/>
</dbReference>
<dbReference type="PANTHER" id="PTHR22746:SF10">
    <property type="entry name" value="GUANINE NUCLEOTIDE EXCHANGE FACTOR SUBUNIT RIC1"/>
    <property type="match status" value="1"/>
</dbReference>
<dbReference type="PANTHER" id="PTHR22746">
    <property type="entry name" value="RAB6A-GEF COMPLEX PARTNER PROTEIN 1"/>
    <property type="match status" value="1"/>
</dbReference>
<dbReference type="Pfam" id="PF25440">
    <property type="entry name" value="Beta-prop_RIC1_2nd"/>
    <property type="match status" value="1"/>
</dbReference>
<dbReference type="Pfam" id="PF07064">
    <property type="entry name" value="RIC1"/>
    <property type="match status" value="1"/>
</dbReference>
<dbReference type="SUPFAM" id="SSF50978">
    <property type="entry name" value="WD40 repeat-like"/>
    <property type="match status" value="1"/>
</dbReference>
<sequence length="1423" mass="159301">MYFLSGWPKRLLCPLGSPAEAPFHVQSDPQRAFFAVLAAARLSIWYSRPSVLIVTYKEPAKSSTQFGSYKQAEWRPDSTMIAVSTANGYILFFHITSTRGDKYLYEPVYPKGSPQMKGTPHFKEEQCAPALNLEMRKILDLQAPIMSLQSVLEDLLVATSDGLLHLIHWEGMTNGRKAINLCTVPFSVDLQSSRVGSFLGFTDVHIRDMEYCATLDGFAVVFNDGKVGFITPVSSRFTAEQLHGVWPQDVVDGTCVAVNNKYRLMAFGCVSGSVQVYTIDNSTGAMLLSHKLELTAKQYPDIWNKTGAVKLMRWSPDNSVVIVTWEYGGLSLWSVFGAQLICTLGGDFAYRSDGTKKDPLKINSMSWGAEGYHLWVISGFGSQNTEIESDLRSVVKQPSILLFQFIKSVLTVNPCMSNQEQVLLQGEDRLYLNCGEASQTQNPRSSSTHSEHKPSREKSPFADGGLESQGLSTLLGHRHWHVVQISSTYLESNWPIRFSAIDKLGQNIAVVGKFGFAHYSLLTKKWKLFGNITQEQNMIVTGGLAWWNDFMVLACYNINDRQEELRVYLRTSNLDNAFAHVTKAQAETLLLSVFQDMVIVFRADCSICLYSIERKSDGPNTTAGIQVLQEVSMSRYIPHPFLVVSVTLTSVSTENGITLKMPQQARGAESIMLNLAGQLIMMQRDRSGPQIREKDSNPNNQRKLLPFCPPVVLAQSVENVWTTCRANKQKRHLLEALWLSCGGAGMKVWLPLFPRDHRKPHSFLSQRIMLPFHINIYPLAVLFEDALVLGAVNDTLLYDSLYTRNNAREQLEVLFPFCVVERTSQIYLHHILRQLLVRNLGEQALLLAQSCATLPYFPHVLELMLHEVLEEEATSREPIPDPLLPTVAKFITEFPLFLQTVVHCARKTEYALWNYLFAAVGNPKDLFEECLMAQDLDTAASYLIILQNMEVPAVSRQHATLLFNTALEQGKWDLCRHMIRFLKAIGSGESETPPSTPTAQEPSSSGGFEFFRNRSISLSQSAENVPASKFSLQKTLSMPSGPSGKRWSKDSDCAENMYIDMMLWRHARRLLEDVRLKDLGCFAAQLGFELISWLCKERTRAARVDNFVIALKRLHKDFLWPLPIIPASSISSPFKNGKYRTVGEQLLKSQSADPFLNLEMDAGISNIQRSQSWLSNIGPTHHEIDTASSHGPQMQDAFLSPLSNKGDECSIGSATDLTESSSMVDGDWTMVDENFSTLSLTQSELEHISMELASKGPHKSQVQLRYLLHIFMEAGCLDWCIVIGLILRESSIINQILVITQSSEVDGEMLQNIKTGLHAVDRWASTDCPGYKPFLNIIKPQLQKLSEITEEQVQPDAFQPITMGKTPEQTSPRAEESRGSSSHGSIPQGEVGSSNMVSRKEEDTAQAEEEEPFQDGTYDCSVS</sequence>
<accession>Q4ADV7</accession>
<accession>B2RN24</accession>
<accession>B7ZM67</accession>
<accession>G5E932</accession>
<accession>Q4VXJ8</accession>
<accession>Q4VXJ9</accession>
<accession>Q76MT5</accession>
<accession>Q8N6E0</accession>
<accession>Q8TEH4</accession>
<accession>Q9H0A5</accession>
<accession>Q9H9S1</accession>
<organism>
    <name type="scientific">Homo sapiens</name>
    <name type="common">Human</name>
    <dbReference type="NCBI Taxonomy" id="9606"/>
    <lineage>
        <taxon>Eukaryota</taxon>
        <taxon>Metazoa</taxon>
        <taxon>Chordata</taxon>
        <taxon>Craniata</taxon>
        <taxon>Vertebrata</taxon>
        <taxon>Euteleostomi</taxon>
        <taxon>Mammalia</taxon>
        <taxon>Eutheria</taxon>
        <taxon>Euarchontoglires</taxon>
        <taxon>Primates</taxon>
        <taxon>Haplorrhini</taxon>
        <taxon>Catarrhini</taxon>
        <taxon>Hominidae</taxon>
        <taxon>Homo</taxon>
    </lineage>
</organism>
<comment type="function">
    <text evidence="5 6 8">The RIC1-RGP1 complex acts as a guanine nucleotide exchange factor (GEF), which activates RAB6A by exchanging bound GDP for free GTP, and may thereby be required for efficient fusion of endosome-derived vesicles with the Golgi compartment (PubMed:23091056). The RIC1-RGP1 complex participates in the recycling of mannose-6-phosphate receptors (PubMed:23091056). Required for phosphorylation and localization of GJA1 (PubMed:16112082). Is a regulator of procollagen transport and secretion, and is required for correct cartilage morphogenesis and development of the craniofacial skeleton (PubMed:31932796).</text>
</comment>
<comment type="subunit">
    <text evidence="5 6">Forms a complex with RGP1; the interaction enhances RAB6A GTPase activity (PubMed:16112082). Interacts (via central domain) with RGP1 (PubMed:16112082). Interacts with RAB6A; the interaction is direct with a preference for RAB6A-GDP (PubMed:16112082). Interacts (via C-terminus domain) with RAB33B; the interaction is direct with a preference for RAB33B-GTP (PubMed:16112082). Interacts with GJA1 (PubMed:23091056).</text>
</comment>
<comment type="subcellular location">
    <subcellularLocation>
        <location evidence="6">Cytoplasm</location>
        <location evidence="6">Cytosol</location>
    </subcellularLocation>
    <subcellularLocation>
        <location evidence="6">Membrane</location>
    </subcellularLocation>
</comment>
<comment type="alternative products">
    <event type="alternative splicing"/>
    <isoform>
        <id>Q4ADV7-1</id>
        <name>1</name>
        <sequence type="displayed"/>
    </isoform>
    <isoform>
        <id>Q4ADV7-2</id>
        <name>2</name>
        <sequence type="described" ref="VSP_031706 VSP_031707"/>
    </isoform>
    <isoform>
        <id>Q4ADV7-3</id>
        <name>3</name>
        <sequence type="described" ref="VSP_042408"/>
    </isoform>
</comment>
<comment type="tissue specificity">
    <text evidence="4 5">Present in kidney and various cell lines (at protein level). Widely expressed at low level.</text>
</comment>
<comment type="disease" evidence="7 8">
    <disease id="DI-05742">
        <name>CATIFA syndrome</name>
        <acronym>CATIFA</acronym>
        <description>An autosomal recessive disorder characterized by global developmental delay, intellectual disability, and behavioral abnormalities with mild to severe attention deficit-hyperactivity disorder. Motor, speech and cognitive deficits range from mild to severe. Patients show craniofacial dysmorphism including elongated face, short, broad upturned nose with anteverted nares and long philtrum. Additional clinical features are cleft lip/palate, tooth abnormalities, and visual impairment due to cataract, strabismus and poor visual tracking.</description>
        <dbReference type="MIM" id="618761"/>
    </disease>
    <text>The disease is caused by variants affecting the gene represented in this entry.</text>
</comment>
<comment type="similarity">
    <text evidence="13">Belongs to the RIC1 family.</text>
</comment>
<comment type="sequence caution" evidence="13">
    <conflict type="erroneous initiation">
        <sequence resource="EMBL-CDS" id="AAI36617"/>
    </conflict>
    <text>Truncated N-terminus.</text>
</comment>
<comment type="sequence caution" evidence="13">
    <conflict type="erroneous initiation">
        <sequence resource="EMBL-CDS" id="AAI44297"/>
    </conflict>
    <text>Truncated N-terminus.</text>
</comment>
<comment type="sequence caution" evidence="13">
    <conflict type="erroneous initiation">
        <sequence resource="EMBL-CDS" id="BAB14150"/>
    </conflict>
    <text>Truncated N-terminus.</text>
</comment>
<comment type="sequence caution" evidence="13">
    <conflict type="erroneous initiation">
        <sequence resource="EMBL-CDS" id="BAE16982"/>
    </conflict>
    <text>Truncated N-terminus.</text>
</comment>
<comment type="sequence caution" evidence="13">
    <conflict type="erroneous initiation">
        <sequence resource="EMBL-CDS" id="CAB66809"/>
    </conflict>
    <text>Truncated N-terminus.</text>
</comment>
<proteinExistence type="evidence at protein level"/>
<keyword id="KW-0025">Alternative splicing</keyword>
<keyword id="KW-0963">Cytoplasm</keyword>
<keyword id="KW-0225">Disease variant</keyword>
<keyword id="KW-0344">Guanine-nucleotide releasing factor</keyword>
<keyword id="KW-0991">Intellectual disability</keyword>
<keyword id="KW-0472">Membrane</keyword>
<keyword id="KW-0597">Phosphoprotein</keyword>
<keyword id="KW-1267">Proteomics identification</keyword>
<keyword id="KW-1185">Reference proteome</keyword>
<keyword id="KW-0677">Repeat</keyword>
<keyword id="KW-0853">WD repeat</keyword>
<protein>
    <recommendedName>
        <fullName evidence="13">Guanine nucleotide exchange factor subunit RIC1</fullName>
    </recommendedName>
    <alternativeName>
        <fullName evidence="12">Connexin-43-interacting protein of 150 kDa</fullName>
    </alternativeName>
    <alternativeName>
        <fullName evidence="1">Protein RIC1 homolog</fullName>
    </alternativeName>
    <alternativeName>
        <fullName evidence="15">RAB6A-GEF complex partner protein 1</fullName>
    </alternativeName>
</protein>
<evidence type="ECO:0000250" key="1">
    <source>
        <dbReference type="UniProtKB" id="P40395"/>
    </source>
</evidence>
<evidence type="ECO:0000250" key="2">
    <source>
        <dbReference type="UniProtKB" id="Q69ZJ7"/>
    </source>
</evidence>
<evidence type="ECO:0000256" key="3">
    <source>
        <dbReference type="SAM" id="MobiDB-lite"/>
    </source>
</evidence>
<evidence type="ECO:0000269" key="4">
    <source>
    </source>
</evidence>
<evidence type="ECO:0000269" key="5">
    <source>
    </source>
</evidence>
<evidence type="ECO:0000269" key="6">
    <source>
    </source>
</evidence>
<evidence type="ECO:0000269" key="7">
    <source>
    </source>
</evidence>
<evidence type="ECO:0000269" key="8">
    <source>
    </source>
</evidence>
<evidence type="ECO:0000303" key="9">
    <source>
    </source>
</evidence>
<evidence type="ECO:0000303" key="10">
    <source>
    </source>
</evidence>
<evidence type="ECO:0000303" key="11">
    <source>
    </source>
</evidence>
<evidence type="ECO:0000303" key="12">
    <source>
    </source>
</evidence>
<evidence type="ECO:0000305" key="13"/>
<evidence type="ECO:0000312" key="14">
    <source>
        <dbReference type="EMBL" id="BAA92670.2"/>
    </source>
</evidence>
<evidence type="ECO:0000312" key="15">
    <source>
        <dbReference type="HGNC" id="HGNC:17686"/>
    </source>
</evidence>
<evidence type="ECO:0007744" key="16">
    <source>
    </source>
</evidence>
<evidence type="ECO:0007744" key="17">
    <source>
    </source>
</evidence>
<name>RIC1_HUMAN</name>